<name>ARGI2_ARATH</name>
<feature type="transit peptide" description="Chloroplast and mitochondrion" evidence="4">
    <location>
        <begin position="1"/>
        <end position="26"/>
    </location>
</feature>
<feature type="chain" id="PRO_0000173704" description="Arginase 2, chloroplastic/mitochondrial">
    <location>
        <begin position="27"/>
        <end position="344"/>
    </location>
</feature>
<feature type="binding site" evidence="5">
    <location>
        <position position="163"/>
    </location>
    <ligand>
        <name>Mn(2+)</name>
        <dbReference type="ChEBI" id="CHEBI:29035"/>
        <label>1</label>
    </ligand>
</feature>
<feature type="binding site" evidence="5">
    <location>
        <position position="187"/>
    </location>
    <ligand>
        <name>Mn(2+)</name>
        <dbReference type="ChEBI" id="CHEBI:29035"/>
        <label>1</label>
    </ligand>
</feature>
<feature type="binding site" evidence="5">
    <location>
        <position position="187"/>
    </location>
    <ligand>
        <name>Mn(2+)</name>
        <dbReference type="ChEBI" id="CHEBI:29035"/>
        <label>2</label>
    </ligand>
</feature>
<feature type="binding site" evidence="3">
    <location>
        <begin position="189"/>
        <end position="193"/>
    </location>
    <ligand>
        <name>substrate</name>
    </ligand>
</feature>
<feature type="binding site" evidence="5">
    <location>
        <position position="189"/>
    </location>
    <ligand>
        <name>Mn(2+)</name>
        <dbReference type="ChEBI" id="CHEBI:29035"/>
        <label>2</label>
    </ligand>
</feature>
<feature type="binding site" evidence="5">
    <location>
        <position position="191"/>
    </location>
    <ligand>
        <name>Mn(2+)</name>
        <dbReference type="ChEBI" id="CHEBI:29035"/>
        <label>1</label>
    </ligand>
</feature>
<feature type="binding site" evidence="3">
    <location>
        <begin position="197"/>
        <end position="199"/>
    </location>
    <ligand>
        <name>substrate</name>
    </ligand>
</feature>
<feature type="binding site" evidence="1">
    <location>
        <position position="228"/>
    </location>
    <ligand>
        <name>substrate</name>
    </ligand>
</feature>
<feature type="binding site" evidence="5">
    <location>
        <position position="272"/>
    </location>
    <ligand>
        <name>Mn(2+)</name>
        <dbReference type="ChEBI" id="CHEBI:29035"/>
        <label>1</label>
    </ligand>
</feature>
<feature type="binding site" evidence="5">
    <location>
        <position position="272"/>
    </location>
    <ligand>
        <name>Mn(2+)</name>
        <dbReference type="ChEBI" id="CHEBI:29035"/>
        <label>2</label>
    </ligand>
</feature>
<feature type="binding site" evidence="5">
    <location>
        <position position="274"/>
    </location>
    <ligand>
        <name>Mn(2+)</name>
        <dbReference type="ChEBI" id="CHEBI:29035"/>
        <label>2</label>
    </ligand>
</feature>
<feature type="binding site" evidence="3">
    <location>
        <position position="315"/>
    </location>
    <ligand>
        <name>substrate</name>
    </ligand>
</feature>
<comment type="function">
    <text evidence="2 9">Catalyzes the hydrolysis of L-arginine to urea and L-ornithine. The latter can be utilized in the urea cycle or as a precursor for the synthesis of both polyamines and proline (By similarity). Possesses agmatinase activity. Catalyzes the formation of putrescine from agmatine (PubMed:28716421).</text>
</comment>
<comment type="catalytic activity">
    <reaction evidence="2">
        <text>L-arginine + H2O = urea + L-ornithine</text>
        <dbReference type="Rhea" id="RHEA:20569"/>
        <dbReference type="ChEBI" id="CHEBI:15377"/>
        <dbReference type="ChEBI" id="CHEBI:16199"/>
        <dbReference type="ChEBI" id="CHEBI:32682"/>
        <dbReference type="ChEBI" id="CHEBI:46911"/>
        <dbReference type="EC" id="3.5.3.1"/>
    </reaction>
</comment>
<comment type="catalytic activity">
    <reaction evidence="9">
        <text>agmatine + H2O = urea + putrescine</text>
        <dbReference type="Rhea" id="RHEA:13929"/>
        <dbReference type="ChEBI" id="CHEBI:15377"/>
        <dbReference type="ChEBI" id="CHEBI:16199"/>
        <dbReference type="ChEBI" id="CHEBI:58145"/>
        <dbReference type="ChEBI" id="CHEBI:326268"/>
        <dbReference type="EC" id="3.5.3.11"/>
    </reaction>
</comment>
<comment type="cofactor">
    <cofactor evidence="5">
        <name>Mn(2+)</name>
        <dbReference type="ChEBI" id="CHEBI:29035"/>
    </cofactor>
    <text evidence="5">Binds 2 manganese ions per subunit.</text>
</comment>
<comment type="biophysicochemical properties">
    <kinetics>
        <KM evidence="9">72.6 uM for agmatine</KM>
    </kinetics>
</comment>
<comment type="pathway">
    <text evidence="2">Nitrogen metabolism; urea cycle; L-ornithine and urea from L-arginine: step 1/1.</text>
</comment>
<comment type="pathway">
    <text evidence="12">Amine and polyamine biosynthesis; putrescine biosynthesis via agmatine pathway; putrescine from agmatine: step 1/1.</text>
</comment>
<comment type="subcellular location">
    <subcellularLocation>
        <location evidence="7">Mitochondrion</location>
    </subcellularLocation>
    <subcellularLocation>
        <location evidence="9">Plastid</location>
        <location evidence="9">Chloroplast</location>
    </subcellularLocation>
</comment>
<comment type="alternative products">
    <event type="alternative splicing"/>
    <isoform>
        <id>Q9ZPF5-1</id>
        <name>1</name>
        <sequence type="displayed"/>
    </isoform>
    <text>A number of isoforms are produced. According to EST sequences.</text>
</comment>
<comment type="tissue specificity">
    <text evidence="6 7">Expressed in vasculature of roots, root tips, leaves and cotyledons.</text>
</comment>
<comment type="induction">
    <text evidence="6 8">By methyl jasmonate and infection with the fungal pathogen B.cinerea.</text>
</comment>
<comment type="disruption phenotype">
    <text evidence="7">Increased formation of lateral and adventitious roots and increased production of NO in roots.</text>
</comment>
<comment type="miscellaneous">
    <text evidence="11">Plants over-expressing ARGAH2 have decreased susceptibility to the fungal pathogen B.cinerea.</text>
</comment>
<comment type="similarity">
    <text evidence="5">Belongs to the arginase family.</text>
</comment>
<sequence>MWKIGQRGVPYFQRLIAAPFTTLRSLPTSLVETGQNRVIDASLTLIRERAKLKGELVRLIGGAKATTALLGVPLGHNSSFLEGPALAPPHVREAIWCGSTNSTTEEGKELKDPRVLSDVGDIPVQEIREMGVDDDRLMKVVSESVKLVMEEEPLRPLVIGGDHSISYPVVRAVSEKLGGPVDILHLDAHPDIYDRFEGNYYSHASSFARIMEGGYARRLLQVGIRSINKEGREQGKRFGVEQYEMRTFSKDRQMLENLKLGEGVKGVYISIDVDCLDPGFAHGVSHFEPGGLSFRDVLNILHNLQGDLVGADVVEYNPQRDTADDMTAMVAAKFVRELAAKMSK</sequence>
<reference key="1">
    <citation type="journal article" date="1999" name="Nature">
        <title>Sequence and analysis of chromosome 4 of the plant Arabidopsis thaliana.</title>
        <authorList>
            <person name="Mayer K.F.X."/>
            <person name="Schueller C."/>
            <person name="Wambutt R."/>
            <person name="Murphy G."/>
            <person name="Volckaert G."/>
            <person name="Pohl T."/>
            <person name="Duesterhoeft A."/>
            <person name="Stiekema W."/>
            <person name="Entian K.-D."/>
            <person name="Terryn N."/>
            <person name="Harris B."/>
            <person name="Ansorge W."/>
            <person name="Brandt P."/>
            <person name="Grivell L.A."/>
            <person name="Rieger M."/>
            <person name="Weichselgartner M."/>
            <person name="de Simone V."/>
            <person name="Obermaier B."/>
            <person name="Mache R."/>
            <person name="Mueller M."/>
            <person name="Kreis M."/>
            <person name="Delseny M."/>
            <person name="Puigdomenech P."/>
            <person name="Watson M."/>
            <person name="Schmidtheini T."/>
            <person name="Reichert B."/>
            <person name="Portetelle D."/>
            <person name="Perez-Alonso M."/>
            <person name="Boutry M."/>
            <person name="Bancroft I."/>
            <person name="Vos P."/>
            <person name="Hoheisel J."/>
            <person name="Zimmermann W."/>
            <person name="Wedler H."/>
            <person name="Ridley P."/>
            <person name="Langham S.-A."/>
            <person name="McCullagh B."/>
            <person name="Bilham L."/>
            <person name="Robben J."/>
            <person name="van der Schueren J."/>
            <person name="Grymonprez B."/>
            <person name="Chuang Y.-J."/>
            <person name="Vandenbussche F."/>
            <person name="Braeken M."/>
            <person name="Weltjens I."/>
            <person name="Voet M."/>
            <person name="Bastiaens I."/>
            <person name="Aert R."/>
            <person name="Defoor E."/>
            <person name="Weitzenegger T."/>
            <person name="Bothe G."/>
            <person name="Ramsperger U."/>
            <person name="Hilbert H."/>
            <person name="Braun M."/>
            <person name="Holzer E."/>
            <person name="Brandt A."/>
            <person name="Peters S."/>
            <person name="van Staveren M."/>
            <person name="Dirkse W."/>
            <person name="Mooijman P."/>
            <person name="Klein Lankhorst R."/>
            <person name="Rose M."/>
            <person name="Hauf J."/>
            <person name="Koetter P."/>
            <person name="Berneiser S."/>
            <person name="Hempel S."/>
            <person name="Feldpausch M."/>
            <person name="Lamberth S."/>
            <person name="Van den Daele H."/>
            <person name="De Keyser A."/>
            <person name="Buysshaert C."/>
            <person name="Gielen J."/>
            <person name="Villarroel R."/>
            <person name="De Clercq R."/>
            <person name="van Montagu M."/>
            <person name="Rogers J."/>
            <person name="Cronin A."/>
            <person name="Quail M.A."/>
            <person name="Bray-Allen S."/>
            <person name="Clark L."/>
            <person name="Doggett J."/>
            <person name="Hall S."/>
            <person name="Kay M."/>
            <person name="Lennard N."/>
            <person name="McLay K."/>
            <person name="Mayes R."/>
            <person name="Pettett A."/>
            <person name="Rajandream M.A."/>
            <person name="Lyne M."/>
            <person name="Benes V."/>
            <person name="Rechmann S."/>
            <person name="Borkova D."/>
            <person name="Bloecker H."/>
            <person name="Scharfe M."/>
            <person name="Grimm M."/>
            <person name="Loehnert T.-H."/>
            <person name="Dose S."/>
            <person name="de Haan M."/>
            <person name="Maarse A.C."/>
            <person name="Schaefer M."/>
            <person name="Mueller-Auer S."/>
            <person name="Gabel C."/>
            <person name="Fuchs M."/>
            <person name="Fartmann B."/>
            <person name="Granderath K."/>
            <person name="Dauner D."/>
            <person name="Herzl A."/>
            <person name="Neumann S."/>
            <person name="Argiriou A."/>
            <person name="Vitale D."/>
            <person name="Liguori R."/>
            <person name="Piravandi E."/>
            <person name="Massenet O."/>
            <person name="Quigley F."/>
            <person name="Clabauld G."/>
            <person name="Muendlein A."/>
            <person name="Felber R."/>
            <person name="Schnabl S."/>
            <person name="Hiller R."/>
            <person name="Schmidt W."/>
            <person name="Lecharny A."/>
            <person name="Aubourg S."/>
            <person name="Chefdor F."/>
            <person name="Cooke R."/>
            <person name="Berger C."/>
            <person name="Monfort A."/>
            <person name="Casacuberta E."/>
            <person name="Gibbons T."/>
            <person name="Weber N."/>
            <person name="Vandenbol M."/>
            <person name="Bargues M."/>
            <person name="Terol J."/>
            <person name="Torres A."/>
            <person name="Perez-Perez A."/>
            <person name="Purnelle B."/>
            <person name="Bent E."/>
            <person name="Johnson S."/>
            <person name="Tacon D."/>
            <person name="Jesse T."/>
            <person name="Heijnen L."/>
            <person name="Schwarz S."/>
            <person name="Scholler P."/>
            <person name="Heber S."/>
            <person name="Francs P."/>
            <person name="Bielke C."/>
            <person name="Frishman D."/>
            <person name="Haase D."/>
            <person name="Lemcke K."/>
            <person name="Mewes H.-W."/>
            <person name="Stocker S."/>
            <person name="Zaccaria P."/>
            <person name="Bevan M."/>
            <person name="Wilson R.K."/>
            <person name="de la Bastide M."/>
            <person name="Habermann K."/>
            <person name="Parnell L."/>
            <person name="Dedhia N."/>
            <person name="Gnoj L."/>
            <person name="Schutz K."/>
            <person name="Huang E."/>
            <person name="Spiegel L."/>
            <person name="Sekhon M."/>
            <person name="Murray J."/>
            <person name="Sheet P."/>
            <person name="Cordes M."/>
            <person name="Abu-Threideh J."/>
            <person name="Stoneking T."/>
            <person name="Kalicki J."/>
            <person name="Graves T."/>
            <person name="Harmon G."/>
            <person name="Edwards J."/>
            <person name="Latreille P."/>
            <person name="Courtney L."/>
            <person name="Cloud J."/>
            <person name="Abbott A."/>
            <person name="Scott K."/>
            <person name="Johnson D."/>
            <person name="Minx P."/>
            <person name="Bentley D."/>
            <person name="Fulton B."/>
            <person name="Miller N."/>
            <person name="Greco T."/>
            <person name="Kemp K."/>
            <person name="Kramer J."/>
            <person name="Fulton L."/>
            <person name="Mardis E."/>
            <person name="Dante M."/>
            <person name="Pepin K."/>
            <person name="Hillier L.W."/>
            <person name="Nelson J."/>
            <person name="Spieth J."/>
            <person name="Ryan E."/>
            <person name="Andrews S."/>
            <person name="Geisel C."/>
            <person name="Layman D."/>
            <person name="Du H."/>
            <person name="Ali J."/>
            <person name="Berghoff A."/>
            <person name="Jones K."/>
            <person name="Drone K."/>
            <person name="Cotton M."/>
            <person name="Joshu C."/>
            <person name="Antonoiu B."/>
            <person name="Zidanic M."/>
            <person name="Strong C."/>
            <person name="Sun H."/>
            <person name="Lamar B."/>
            <person name="Yordan C."/>
            <person name="Ma P."/>
            <person name="Zhong J."/>
            <person name="Preston R."/>
            <person name="Vil D."/>
            <person name="Shekher M."/>
            <person name="Matero A."/>
            <person name="Shah R."/>
            <person name="Swaby I.K."/>
            <person name="O'Shaughnessy A."/>
            <person name="Rodriguez M."/>
            <person name="Hoffman J."/>
            <person name="Till S."/>
            <person name="Granat S."/>
            <person name="Shohdy N."/>
            <person name="Hasegawa A."/>
            <person name="Hameed A."/>
            <person name="Lodhi M."/>
            <person name="Johnson A."/>
            <person name="Chen E."/>
            <person name="Marra M.A."/>
            <person name="Martienssen R."/>
            <person name="McCombie W.R."/>
        </authorList>
    </citation>
    <scope>NUCLEOTIDE SEQUENCE [LARGE SCALE GENOMIC DNA]</scope>
    <source>
        <strain>cv. Columbia</strain>
    </source>
</reference>
<reference key="2">
    <citation type="journal article" date="2017" name="Plant J.">
        <title>Araport11: a complete reannotation of the Arabidopsis thaliana reference genome.</title>
        <authorList>
            <person name="Cheng C.Y."/>
            <person name="Krishnakumar V."/>
            <person name="Chan A.P."/>
            <person name="Thibaud-Nissen F."/>
            <person name="Schobel S."/>
            <person name="Town C.D."/>
        </authorList>
    </citation>
    <scope>GENOME REANNOTATION</scope>
    <source>
        <strain>cv. Columbia</strain>
    </source>
</reference>
<reference key="3">
    <citation type="journal article" date="2003" name="Science">
        <title>Empirical analysis of transcriptional activity in the Arabidopsis genome.</title>
        <authorList>
            <person name="Yamada K."/>
            <person name="Lim J."/>
            <person name="Dale J.M."/>
            <person name="Chen H."/>
            <person name="Shinn P."/>
            <person name="Palm C.J."/>
            <person name="Southwick A.M."/>
            <person name="Wu H.C."/>
            <person name="Kim C.J."/>
            <person name="Nguyen M."/>
            <person name="Pham P.K."/>
            <person name="Cheuk R.F."/>
            <person name="Karlin-Newmann G."/>
            <person name="Liu S.X."/>
            <person name="Lam B."/>
            <person name="Sakano H."/>
            <person name="Wu T."/>
            <person name="Yu G."/>
            <person name="Miranda M."/>
            <person name="Quach H.L."/>
            <person name="Tripp M."/>
            <person name="Chang C.H."/>
            <person name="Lee J.M."/>
            <person name="Toriumi M.J."/>
            <person name="Chan M.M."/>
            <person name="Tang C.C."/>
            <person name="Onodera C.S."/>
            <person name="Deng J.M."/>
            <person name="Akiyama K."/>
            <person name="Ansari Y."/>
            <person name="Arakawa T."/>
            <person name="Banh J."/>
            <person name="Banno F."/>
            <person name="Bowser L."/>
            <person name="Brooks S.Y."/>
            <person name="Carninci P."/>
            <person name="Chao Q."/>
            <person name="Choy N."/>
            <person name="Enju A."/>
            <person name="Goldsmith A.D."/>
            <person name="Gurjal M."/>
            <person name="Hansen N.F."/>
            <person name="Hayashizaki Y."/>
            <person name="Johnson-Hopson C."/>
            <person name="Hsuan V.W."/>
            <person name="Iida K."/>
            <person name="Karnes M."/>
            <person name="Khan S."/>
            <person name="Koesema E."/>
            <person name="Ishida J."/>
            <person name="Jiang P.X."/>
            <person name="Jones T."/>
            <person name="Kawai J."/>
            <person name="Kamiya A."/>
            <person name="Meyers C."/>
            <person name="Nakajima M."/>
            <person name="Narusaka M."/>
            <person name="Seki M."/>
            <person name="Sakurai T."/>
            <person name="Satou M."/>
            <person name="Tamse R."/>
            <person name="Vaysberg M."/>
            <person name="Wallender E.K."/>
            <person name="Wong C."/>
            <person name="Yamamura Y."/>
            <person name="Yuan S."/>
            <person name="Shinozaki K."/>
            <person name="Davis R.W."/>
            <person name="Theologis A."/>
            <person name="Ecker J.R."/>
        </authorList>
    </citation>
    <scope>NUCLEOTIDE SEQUENCE [LARGE SCALE MRNA]</scope>
    <source>
        <strain>cv. Columbia</strain>
    </source>
</reference>
<reference key="4">
    <citation type="journal article" date="2008" name="Plant Mol. Biol.">
        <title>Analysis of Arabidopsis arginase gene transcription patterns indicates specific biological functions for recently diverged paralogs.</title>
        <authorList>
            <person name="Brownfield D.L."/>
            <person name="Todd C.D."/>
            <person name="Deyholos M.K."/>
        </authorList>
    </citation>
    <scope>TISSUE SPECIFICITY</scope>
    <scope>INDUCTION BY METHYL JASMONATE</scope>
</reference>
<reference key="5">
    <citation type="journal article" date="2008" name="Plant Physiol.">
        <title>Arginase-negative mutants of Arabidopsis exhibit increased nitric oxide signaling in root development.</title>
        <authorList>
            <person name="Flores T."/>
            <person name="Todd C.D."/>
            <person name="Tovar-Mendez A."/>
            <person name="Dhanoa P.K."/>
            <person name="Correa-Aragunde N."/>
            <person name="Hoyos M.E."/>
            <person name="Brownfield D.M."/>
            <person name="Mullen R.T."/>
            <person name="Lamattina L."/>
            <person name="Polacco J.C."/>
        </authorList>
    </citation>
    <scope>SUBCELLULAR LOCATION</scope>
    <scope>TISSUE SPECIFICITY</scope>
    <scope>DISRUPTION PHENOTYPE</scope>
</reference>
<reference key="6">
    <citation type="journal article" date="2012" name="Plant Biol.">
        <title>Overexpression of arginase in Arabidopsis thaliana influences defence responses against Botrytis cinerea.</title>
        <authorList>
            <person name="Brauc S."/>
            <person name="De Vooght E."/>
            <person name="Claeys M."/>
            <person name="Geuns J.M."/>
            <person name="Hoefte M."/>
            <person name="Angenon G."/>
        </authorList>
    </citation>
    <scope>INDUCTION</scope>
</reference>
<reference key="7">
    <citation type="journal article" date="2017" name="Plant Sci.">
        <title>Dual functioning of plant arginases provides a third route for putrescine synthesis.</title>
        <authorList>
            <person name="Patel J."/>
            <person name="Ariyaratne M."/>
            <person name="Ahmed S."/>
            <person name="Ge L."/>
            <person name="Phuntumart V."/>
            <person name="Kalinoski A."/>
            <person name="Morris P.F."/>
        </authorList>
    </citation>
    <scope>FUNCTION</scope>
    <scope>CATALYTIC ACTIVITY</scope>
    <scope>BIOPHYSICOCHEMICAL PROPERTIES</scope>
    <scope>SUBCELLULAR LOCATION</scope>
</reference>
<accession>Q9ZPF5</accession>
<dbReference type="EC" id="3.5.3.1" evidence="2"/>
<dbReference type="EC" id="3.5.3.11" evidence="9"/>
<dbReference type="EMBL" id="AF128396">
    <property type="protein sequence ID" value="AAD17371.1"/>
    <property type="molecule type" value="Genomic_DNA"/>
</dbReference>
<dbReference type="EMBL" id="AL161513">
    <property type="protein sequence ID" value="CAB78011.1"/>
    <property type="molecule type" value="Genomic_DNA"/>
</dbReference>
<dbReference type="EMBL" id="CP002687">
    <property type="protein sequence ID" value="AEE82684.1"/>
    <property type="molecule type" value="Genomic_DNA"/>
</dbReference>
<dbReference type="EMBL" id="BT003815">
    <property type="protein sequence ID" value="AAO41868.1"/>
    <property type="molecule type" value="mRNA"/>
</dbReference>
<dbReference type="PIR" id="C85089">
    <property type="entry name" value="C85089"/>
</dbReference>
<dbReference type="RefSeq" id="NP_192626.1">
    <molecule id="Q9ZPF5-1"/>
    <property type="nucleotide sequence ID" value="NM_116956.4"/>
</dbReference>
<dbReference type="SMR" id="Q9ZPF5"/>
<dbReference type="BioGRID" id="11757">
    <property type="interactions" value="1"/>
</dbReference>
<dbReference type="FunCoup" id="Q9ZPF5">
    <property type="interactions" value="838"/>
</dbReference>
<dbReference type="STRING" id="3702.Q9ZPF5"/>
<dbReference type="PaxDb" id="3702-AT4G08870.1"/>
<dbReference type="ProteomicsDB" id="241057">
    <molecule id="Q9ZPF5-1"/>
</dbReference>
<dbReference type="EnsemblPlants" id="AT4G08870.1">
    <molecule id="Q9ZPF5-1"/>
    <property type="protein sequence ID" value="AT4G08870.1"/>
    <property type="gene ID" value="AT4G08870"/>
</dbReference>
<dbReference type="GeneID" id="826458"/>
<dbReference type="Gramene" id="AT4G08870.1">
    <molecule id="Q9ZPF5-1"/>
    <property type="protein sequence ID" value="AT4G08870.1"/>
    <property type="gene ID" value="AT4G08870"/>
</dbReference>
<dbReference type="KEGG" id="ath:AT4G08870"/>
<dbReference type="Araport" id="AT4G08870"/>
<dbReference type="TAIR" id="AT4G08870">
    <property type="gene designation" value="ARGAH2"/>
</dbReference>
<dbReference type="eggNOG" id="KOG2964">
    <property type="taxonomic scope" value="Eukaryota"/>
</dbReference>
<dbReference type="HOGENOM" id="CLU_039478_3_0_1"/>
<dbReference type="InParanoid" id="Q9ZPF5"/>
<dbReference type="OMA" id="YAQIPTF"/>
<dbReference type="PhylomeDB" id="Q9ZPF5"/>
<dbReference type="SABIO-RK" id="Q9ZPF5"/>
<dbReference type="UniPathway" id="UPA00158">
    <property type="reaction ID" value="UER00270"/>
</dbReference>
<dbReference type="UniPathway" id="UPA00534">
    <property type="reaction ID" value="UER00287"/>
</dbReference>
<dbReference type="PRO" id="PR:Q9ZPF5"/>
<dbReference type="Proteomes" id="UP000006548">
    <property type="component" value="Chromosome 4"/>
</dbReference>
<dbReference type="ExpressionAtlas" id="Q9ZPF5">
    <property type="expression patterns" value="baseline and differential"/>
</dbReference>
<dbReference type="GO" id="GO:0009570">
    <property type="term" value="C:chloroplast stroma"/>
    <property type="evidence" value="ECO:0000314"/>
    <property type="project" value="TAIR"/>
</dbReference>
<dbReference type="GO" id="GO:0005829">
    <property type="term" value="C:cytosol"/>
    <property type="evidence" value="ECO:0007005"/>
    <property type="project" value="TAIR"/>
</dbReference>
<dbReference type="GO" id="GO:0005739">
    <property type="term" value="C:mitochondrion"/>
    <property type="evidence" value="ECO:0007005"/>
    <property type="project" value="TAIR"/>
</dbReference>
<dbReference type="GO" id="GO:0008783">
    <property type="term" value="F:agmatinase activity"/>
    <property type="evidence" value="ECO:0000314"/>
    <property type="project" value="TAIR"/>
</dbReference>
<dbReference type="GO" id="GO:0004053">
    <property type="term" value="F:arginase activity"/>
    <property type="evidence" value="ECO:0000314"/>
    <property type="project" value="TAIR"/>
</dbReference>
<dbReference type="GO" id="GO:0050897">
    <property type="term" value="F:cobalt ion binding"/>
    <property type="evidence" value="ECO:0007005"/>
    <property type="project" value="TAIR"/>
</dbReference>
<dbReference type="GO" id="GO:0050832">
    <property type="term" value="P:defense response to fungus"/>
    <property type="evidence" value="ECO:0000315"/>
    <property type="project" value="TAIR"/>
</dbReference>
<dbReference type="GO" id="GO:0006591">
    <property type="term" value="P:ornithine metabolic process"/>
    <property type="evidence" value="ECO:0000315"/>
    <property type="project" value="TAIR"/>
</dbReference>
<dbReference type="GO" id="GO:0006560">
    <property type="term" value="P:proline metabolic process"/>
    <property type="evidence" value="ECO:0000315"/>
    <property type="project" value="TAIR"/>
</dbReference>
<dbReference type="GO" id="GO:0009446">
    <property type="term" value="P:putrescine biosynthetic process"/>
    <property type="evidence" value="ECO:0000314"/>
    <property type="project" value="TAIR"/>
</dbReference>
<dbReference type="GO" id="GO:0033389">
    <property type="term" value="P:putrescine biosynthetic process from arginine, via agmatine"/>
    <property type="evidence" value="ECO:0000314"/>
    <property type="project" value="UniProtKB"/>
</dbReference>
<dbReference type="GO" id="GO:0009445">
    <property type="term" value="P:putrescine metabolic process"/>
    <property type="evidence" value="ECO:0000315"/>
    <property type="project" value="TAIR"/>
</dbReference>
<dbReference type="GO" id="GO:0006570">
    <property type="term" value="P:tyrosine metabolic process"/>
    <property type="evidence" value="ECO:0000315"/>
    <property type="project" value="TAIR"/>
</dbReference>
<dbReference type="GO" id="GO:0000050">
    <property type="term" value="P:urea cycle"/>
    <property type="evidence" value="ECO:0007669"/>
    <property type="project" value="UniProtKB-UniPathway"/>
</dbReference>
<dbReference type="CDD" id="cd11593">
    <property type="entry name" value="Agmatinase-like_2"/>
    <property type="match status" value="1"/>
</dbReference>
<dbReference type="FunFam" id="3.40.800.10:FF:000007">
    <property type="entry name" value="Arginase 1, mitochondrial"/>
    <property type="match status" value="1"/>
</dbReference>
<dbReference type="Gene3D" id="3.40.800.10">
    <property type="entry name" value="Ureohydrolase domain"/>
    <property type="match status" value="1"/>
</dbReference>
<dbReference type="InterPro" id="IPR006035">
    <property type="entry name" value="Ureohydrolase"/>
</dbReference>
<dbReference type="InterPro" id="IPR023696">
    <property type="entry name" value="Ureohydrolase_dom_sf"/>
</dbReference>
<dbReference type="PANTHER" id="PTHR11358:SF32">
    <property type="entry name" value="ARGINASE 2, CHLOROPLASTIC_MITOCHONDRIAL"/>
    <property type="match status" value="1"/>
</dbReference>
<dbReference type="PANTHER" id="PTHR11358">
    <property type="entry name" value="ARGINASE/AGMATINASE"/>
    <property type="match status" value="1"/>
</dbReference>
<dbReference type="Pfam" id="PF00491">
    <property type="entry name" value="Arginase"/>
    <property type="match status" value="1"/>
</dbReference>
<dbReference type="PIRSF" id="PIRSF036979">
    <property type="entry name" value="Arginase"/>
    <property type="match status" value="1"/>
</dbReference>
<dbReference type="SUPFAM" id="SSF52768">
    <property type="entry name" value="Arginase/deacetylase"/>
    <property type="match status" value="1"/>
</dbReference>
<dbReference type="PROSITE" id="PS51409">
    <property type="entry name" value="ARGINASE_2"/>
    <property type="match status" value="1"/>
</dbReference>
<evidence type="ECO:0000250" key="1"/>
<evidence type="ECO:0000250" key="2">
    <source>
        <dbReference type="UniProtKB" id="P05089"/>
    </source>
</evidence>
<evidence type="ECO:0000250" key="3">
    <source>
        <dbReference type="UniProtKB" id="P53608"/>
    </source>
</evidence>
<evidence type="ECO:0000255" key="4"/>
<evidence type="ECO:0000255" key="5">
    <source>
        <dbReference type="PROSITE-ProRule" id="PRU00742"/>
    </source>
</evidence>
<evidence type="ECO:0000269" key="6">
    <source>
    </source>
</evidence>
<evidence type="ECO:0000269" key="7">
    <source>
    </source>
</evidence>
<evidence type="ECO:0000269" key="8">
    <source>
    </source>
</evidence>
<evidence type="ECO:0000269" key="9">
    <source>
    </source>
</evidence>
<evidence type="ECO:0000305" key="10"/>
<evidence type="ECO:0000305" key="11">
    <source>
    </source>
</evidence>
<evidence type="ECO:0000305" key="12">
    <source>
    </source>
</evidence>
<gene>
    <name type="primary">ARGAH2</name>
    <name type="ordered locus">At4g08870</name>
    <name type="ORF">T3H13.10</name>
</gene>
<organism>
    <name type="scientific">Arabidopsis thaliana</name>
    <name type="common">Mouse-ear cress</name>
    <dbReference type="NCBI Taxonomy" id="3702"/>
    <lineage>
        <taxon>Eukaryota</taxon>
        <taxon>Viridiplantae</taxon>
        <taxon>Streptophyta</taxon>
        <taxon>Embryophyta</taxon>
        <taxon>Tracheophyta</taxon>
        <taxon>Spermatophyta</taxon>
        <taxon>Magnoliopsida</taxon>
        <taxon>eudicotyledons</taxon>
        <taxon>Gunneridae</taxon>
        <taxon>Pentapetalae</taxon>
        <taxon>rosids</taxon>
        <taxon>malvids</taxon>
        <taxon>Brassicales</taxon>
        <taxon>Brassicaceae</taxon>
        <taxon>Camelineae</taxon>
        <taxon>Arabidopsis</taxon>
    </lineage>
</organism>
<keyword id="KW-0025">Alternative splicing</keyword>
<keyword id="KW-0056">Arginine metabolism</keyword>
<keyword id="KW-0150">Chloroplast</keyword>
<keyword id="KW-0378">Hydrolase</keyword>
<keyword id="KW-0464">Manganese</keyword>
<keyword id="KW-0479">Metal-binding</keyword>
<keyword id="KW-0496">Mitochondrion</keyword>
<keyword id="KW-0934">Plastid</keyword>
<keyword id="KW-0661">Putrescine biosynthesis</keyword>
<keyword id="KW-1185">Reference proteome</keyword>
<keyword id="KW-0809">Transit peptide</keyword>
<proteinExistence type="evidence at protein level"/>
<protein>
    <recommendedName>
        <fullName>Arginase 2, chloroplastic/mitochondrial</fullName>
        <ecNumber evidence="2">3.5.3.1</ecNumber>
    </recommendedName>
    <alternativeName>
        <fullName evidence="10">Agmatinase ARGAH2</fullName>
        <ecNumber evidence="9">3.5.3.11</ecNumber>
    </alternativeName>
    <alternativeName>
        <fullName>Arginine amidohydrolase 2</fullName>
    </alternativeName>
</protein>